<feature type="chain" id="PRO_0000041756" description="Metallothionein-2B">
    <location>
        <begin position="1"/>
        <end position="58"/>
    </location>
</feature>
<feature type="chain" id="PRO_0000041757" description="Metallothionein-2A">
    <location>
        <begin position="2"/>
        <end position="58"/>
    </location>
</feature>
<feature type="region of interest" description="Beta">
    <location>
        <begin position="1"/>
        <end position="29"/>
    </location>
</feature>
<feature type="region of interest" description="Alpha">
    <location>
        <begin position="30"/>
        <end position="58"/>
    </location>
</feature>
<feature type="binding site" evidence="1">
    <location>
        <position position="5"/>
    </location>
    <ligand>
        <name>a divalent metal cation</name>
        <dbReference type="ChEBI" id="CHEBI:60240"/>
        <label>1</label>
        <note>in cluster B</note>
    </ligand>
</feature>
<feature type="binding site" evidence="1">
    <location>
        <position position="6"/>
    </location>
    <ligand>
        <name>a divalent metal cation</name>
        <dbReference type="ChEBI" id="CHEBI:60240"/>
        <label>1</label>
        <note>in cluster B</note>
    </ligand>
</feature>
<feature type="binding site" evidence="1">
    <location>
        <position position="6"/>
    </location>
    <ligand>
        <name>a divalent metal cation</name>
        <dbReference type="ChEBI" id="CHEBI:60240"/>
        <label>2</label>
        <note>in cluster B</note>
    </ligand>
</feature>
<feature type="binding site" evidence="1">
    <location>
        <position position="10"/>
    </location>
    <ligand>
        <name>a divalent metal cation</name>
        <dbReference type="ChEBI" id="CHEBI:60240"/>
        <label>2</label>
        <note>in cluster B</note>
    </ligand>
</feature>
<feature type="binding site" evidence="1">
    <location>
        <position position="12"/>
    </location>
    <ligand>
        <name>a divalent metal cation</name>
        <dbReference type="ChEBI" id="CHEBI:60240"/>
        <label>3</label>
        <note>in cluster B</note>
    </ligand>
</feature>
<feature type="binding site" evidence="1">
    <location>
        <position position="17"/>
    </location>
    <ligand>
        <name>a divalent metal cation</name>
        <dbReference type="ChEBI" id="CHEBI:60240"/>
        <label>1</label>
        <note>in cluster B</note>
    </ligand>
</feature>
<feature type="binding site" evidence="1">
    <location>
        <position position="17"/>
    </location>
    <ligand>
        <name>a divalent metal cation</name>
        <dbReference type="ChEBI" id="CHEBI:60240"/>
        <label>3</label>
        <note>in cluster B</note>
    </ligand>
</feature>
<feature type="binding site" evidence="1">
    <location>
        <position position="21"/>
    </location>
    <ligand>
        <name>a divalent metal cation</name>
        <dbReference type="ChEBI" id="CHEBI:60240"/>
        <label>1</label>
        <note>in cluster B</note>
    </ligand>
</feature>
<feature type="binding site" evidence="1">
    <location>
        <position position="23"/>
    </location>
    <ligand>
        <name>a divalent metal cation</name>
        <dbReference type="ChEBI" id="CHEBI:60240"/>
        <label>2</label>
        <note>in cluster B</note>
    </ligand>
</feature>
<feature type="binding site" evidence="1">
    <location>
        <position position="26"/>
    </location>
    <ligand>
        <name>a divalent metal cation</name>
        <dbReference type="ChEBI" id="CHEBI:60240"/>
        <label>2</label>
        <note>in cluster B</note>
    </ligand>
</feature>
<feature type="binding site" evidence="1">
    <location>
        <position position="26"/>
    </location>
    <ligand>
        <name>a divalent metal cation</name>
        <dbReference type="ChEBI" id="CHEBI:60240"/>
        <label>3</label>
        <note>in cluster B</note>
    </ligand>
</feature>
<feature type="binding site" evidence="1">
    <location>
        <position position="28"/>
    </location>
    <ligand>
        <name>a divalent metal cation</name>
        <dbReference type="ChEBI" id="CHEBI:60240"/>
        <label>3</label>
        <note>in cluster B</note>
    </ligand>
</feature>
<feature type="binding site" evidence="1">
    <location>
        <position position="31"/>
    </location>
    <ligand>
        <name>a divalent metal cation</name>
        <dbReference type="ChEBI" id="CHEBI:60240"/>
        <label>4</label>
        <note>in cluster A</note>
    </ligand>
</feature>
<feature type="binding site" evidence="1">
    <location>
        <position position="34"/>
    </location>
    <ligand>
        <name>a divalent metal cation</name>
        <dbReference type="ChEBI" id="CHEBI:60240"/>
        <label>4</label>
        <note>in cluster A</note>
    </ligand>
</feature>
<feature type="binding site" evidence="1">
    <location>
        <position position="34"/>
    </location>
    <ligand>
        <name>a divalent metal cation</name>
        <dbReference type="ChEBI" id="CHEBI:60240"/>
        <label>5</label>
        <note>in cluster A</note>
    </ligand>
</feature>
<feature type="binding site" evidence="1">
    <location>
        <position position="38"/>
    </location>
    <ligand>
        <name>a divalent metal cation</name>
        <dbReference type="ChEBI" id="CHEBI:60240"/>
        <label>5</label>
        <note>in cluster A</note>
    </ligand>
</feature>
<feature type="binding site" evidence="1">
    <location>
        <position position="40"/>
    </location>
    <ligand>
        <name>a divalent metal cation</name>
        <dbReference type="ChEBI" id="CHEBI:60240"/>
        <label>6</label>
        <note>in cluster A</note>
    </ligand>
</feature>
<feature type="binding site" evidence="1">
    <location>
        <position position="46"/>
    </location>
    <ligand>
        <name>a divalent metal cation</name>
        <dbReference type="ChEBI" id="CHEBI:60240"/>
        <label>6</label>
        <note>in cluster A</note>
    </ligand>
</feature>
<feature type="binding site" evidence="1">
    <location>
        <position position="50"/>
    </location>
    <ligand>
        <name>a divalent metal cation</name>
        <dbReference type="ChEBI" id="CHEBI:60240"/>
        <label>4</label>
        <note>in cluster A</note>
    </ligand>
</feature>
<feature type="binding site" evidence="1">
    <location>
        <position position="50"/>
    </location>
    <ligand>
        <name>a divalent metal cation</name>
        <dbReference type="ChEBI" id="CHEBI:60240"/>
        <label>6</label>
        <note>in cluster A</note>
    </ligand>
</feature>
<feature type="binding site" evidence="1">
    <location>
        <position position="54"/>
    </location>
    <ligand>
        <name>a divalent metal cation</name>
        <dbReference type="ChEBI" id="CHEBI:60240"/>
        <label>4</label>
        <note>in cluster A</note>
    </ligand>
</feature>
<feature type="binding site" evidence="1">
    <location>
        <position position="56"/>
    </location>
    <ligand>
        <name>a divalent metal cation</name>
        <dbReference type="ChEBI" id="CHEBI:60240"/>
        <label>5</label>
        <note>in cluster A</note>
    </ligand>
</feature>
<feature type="binding site" evidence="1">
    <location>
        <position position="57"/>
    </location>
    <ligand>
        <name>a divalent metal cation</name>
        <dbReference type="ChEBI" id="CHEBI:60240"/>
        <label>5</label>
        <note>in cluster A</note>
    </ligand>
</feature>
<feature type="binding site" evidence="1">
    <location>
        <position position="57"/>
    </location>
    <ligand>
        <name>a divalent metal cation</name>
        <dbReference type="ChEBI" id="CHEBI:60240"/>
        <label>6</label>
        <note>in cluster A</note>
    </ligand>
</feature>
<accession>P55950</accession>
<proteinExistence type="evidence at protein level"/>
<comment type="function">
    <text>Binds six divalent metal ions. Known to bind copper and cadmium.</text>
</comment>
<comment type="similarity">
    <text evidence="2">Belongs to the metallothionein superfamily. Type 3 family.</text>
</comment>
<evidence type="ECO:0000250" key="1">
    <source>
        <dbReference type="UniProtKB" id="P29499"/>
    </source>
</evidence>
<evidence type="ECO:0000305" key="2"/>
<protein>
    <recommendedName>
        <fullName>Metallothionein-2B</fullName>
        <shortName>MT-2B</shortName>
    </recommendedName>
    <alternativeName>
        <fullName>Metallothionein-IIB</fullName>
        <shortName>MT-IIB</shortName>
    </alternativeName>
    <component>
        <recommendedName>
            <fullName>Metallothionein-2A</fullName>
            <shortName>MT-2A</shortName>
        </recommendedName>
        <alternativeName>
            <fullName>Metallothionein-IIA</fullName>
            <shortName>MT-IIA</shortName>
        </alternativeName>
    </component>
</protein>
<dbReference type="PIR" id="S59073">
    <property type="entry name" value="S59073"/>
</dbReference>
<dbReference type="SMR" id="P55950"/>
<dbReference type="GO" id="GO:0046872">
    <property type="term" value="F:metal ion binding"/>
    <property type="evidence" value="ECO:0007669"/>
    <property type="project" value="UniProtKB-KW"/>
</dbReference>
<dbReference type="InterPro" id="IPR002045">
    <property type="entry name" value="Metalthion_crustacean"/>
</dbReference>
<dbReference type="InterPro" id="IPR017854">
    <property type="entry name" value="Metalthion_dom_sf"/>
</dbReference>
<dbReference type="PRINTS" id="PR00858">
    <property type="entry name" value="MTCRUSTACEAN"/>
</dbReference>
<dbReference type="SUPFAM" id="SSF57868">
    <property type="entry name" value="Metallothionein"/>
    <property type="match status" value="2"/>
</dbReference>
<sequence length="58" mass="6287">MPDPCCNDKCECKEGECKTGCKCKSCRCPPCDKCSSECKCTSKEECSKTCSKPCSCCP</sequence>
<organism>
    <name type="scientific">Callinectes sapidus</name>
    <name type="common">Blue crab</name>
    <dbReference type="NCBI Taxonomy" id="6763"/>
    <lineage>
        <taxon>Eukaryota</taxon>
        <taxon>Metazoa</taxon>
        <taxon>Ecdysozoa</taxon>
        <taxon>Arthropoda</taxon>
        <taxon>Crustacea</taxon>
        <taxon>Multicrustacea</taxon>
        <taxon>Malacostraca</taxon>
        <taxon>Eumalacostraca</taxon>
        <taxon>Eucarida</taxon>
        <taxon>Decapoda</taxon>
        <taxon>Pleocyemata</taxon>
        <taxon>Brachyura</taxon>
        <taxon>Eubrachyura</taxon>
        <taxon>Portunoidea</taxon>
        <taxon>Portunidae</taxon>
        <taxon>Portuninae</taxon>
        <taxon>Callinectes</taxon>
    </lineage>
</organism>
<name>MT2_CALSI</name>
<keyword id="KW-0104">Cadmium</keyword>
<keyword id="KW-0186">Copper</keyword>
<keyword id="KW-0903">Direct protein sequencing</keyword>
<keyword id="KW-0479">Metal-binding</keyword>
<keyword id="KW-0480">Metal-thiolate cluster</keyword>
<reference key="1">
    <citation type="journal article" date="1995" name="Biochem. J.">
        <title>Primary structure and tissue-specific expression of blue crab (Callinectes sapidus) metallothionein isoforms.</title>
        <authorList>
            <person name="Brouwer M."/>
            <person name="Enghild J."/>
            <person name="Hoexum-Brouwer T."/>
            <person name="Thogersen I."/>
            <person name="Truncali A."/>
        </authorList>
    </citation>
    <scope>PROTEIN SEQUENCE</scope>
</reference>